<comment type="catalytic activity">
    <reaction evidence="1">
        <text>Random endo-hydrolysis of N-acetyl-beta-D-glucosaminide (1-&gt;4)-beta-linkages in chitin and chitodextrins.</text>
        <dbReference type="EC" id="3.2.1.14"/>
    </reaction>
</comment>
<comment type="interaction">
    <interactant intactId="EBI-25530116">
        <id>O22842</id>
    </interactant>
    <interactant intactId="EBI-25519488">
        <id>Q9SZU7</id>
        <label>KAI2</label>
    </interactant>
    <organismsDiffer>false</organismsDiffer>
    <experiments>3</experiments>
</comment>
<comment type="similarity">
    <text evidence="5">Belongs to the glycosyl hydrolase 19 family. Chitinase class I subfamily.</text>
</comment>
<sequence length="281" mass="29999">MATQNAILKKALIIFLFTLTIMTGTAFSQNCGTNGCKGNMCCSRWGYCGTTKAYCGTGCQSGPCNSKPKPTPTPSGSGGLNAGPRGTIASVITPAFFNSIMSKVGSGCPAKGFYTRQAFIAAAESFAAYKGTVAKREIAAMLAQFSHESGSFCYKEEIARGRYCSPSTTYPCQPGKNYYGRGPIQITWNYNYGAAGKFLGLPLLKDPDMVARSPTVAFQCAMWFWNKNVRPVLSQGFGATTRRINGGECNGGRPAAVQSRVNHYLDFCKKLGVTPGTNLSC</sequence>
<organism evidence="8">
    <name type="scientific">Arabidopsis thaliana</name>
    <name type="common">Mouse-ear cress</name>
    <dbReference type="NCBI Taxonomy" id="3702"/>
    <lineage>
        <taxon>Eukaryota</taxon>
        <taxon>Viridiplantae</taxon>
        <taxon>Streptophyta</taxon>
        <taxon>Embryophyta</taxon>
        <taxon>Tracheophyta</taxon>
        <taxon>Spermatophyta</taxon>
        <taxon>Magnoliopsida</taxon>
        <taxon>eudicotyledons</taxon>
        <taxon>Gunneridae</taxon>
        <taxon>Pentapetalae</taxon>
        <taxon>rosids</taxon>
        <taxon>malvids</taxon>
        <taxon>Brassicales</taxon>
        <taxon>Brassicaceae</taxon>
        <taxon>Camelineae</taxon>
        <taxon>Arabidopsis</taxon>
    </lineage>
</organism>
<reference key="1">
    <citation type="journal article" date="1999" name="Nature">
        <title>Sequence and analysis of chromosome 2 of the plant Arabidopsis thaliana.</title>
        <authorList>
            <person name="Lin X."/>
            <person name="Kaul S."/>
            <person name="Rounsley S.D."/>
            <person name="Shea T.P."/>
            <person name="Benito M.-I."/>
            <person name="Town C.D."/>
            <person name="Fujii C.Y."/>
            <person name="Mason T.M."/>
            <person name="Bowman C.L."/>
            <person name="Barnstead M.E."/>
            <person name="Feldblyum T.V."/>
            <person name="Buell C.R."/>
            <person name="Ketchum K.A."/>
            <person name="Lee J.J."/>
            <person name="Ronning C.M."/>
            <person name="Koo H.L."/>
            <person name="Moffat K.S."/>
            <person name="Cronin L.A."/>
            <person name="Shen M."/>
            <person name="Pai G."/>
            <person name="Van Aken S."/>
            <person name="Umayam L."/>
            <person name="Tallon L.J."/>
            <person name="Gill J.E."/>
            <person name="Adams M.D."/>
            <person name="Carrera A.J."/>
            <person name="Creasy T.H."/>
            <person name="Goodman H.M."/>
            <person name="Somerville C.R."/>
            <person name="Copenhaver G.P."/>
            <person name="Preuss D."/>
            <person name="Nierman W.C."/>
            <person name="White O."/>
            <person name="Eisen J.A."/>
            <person name="Salzberg S.L."/>
            <person name="Fraser C.M."/>
            <person name="Venter J.C."/>
        </authorList>
    </citation>
    <scope>NUCLEOTIDE SEQUENCE [LARGE SCALE GENOMIC DNA]</scope>
    <source>
        <strain>cv. Columbia</strain>
    </source>
</reference>
<reference key="2">
    <citation type="journal article" date="2017" name="Plant J.">
        <title>Araport11: a complete reannotation of the Arabidopsis thaliana reference genome.</title>
        <authorList>
            <person name="Cheng C.Y."/>
            <person name="Krishnakumar V."/>
            <person name="Chan A.P."/>
            <person name="Thibaud-Nissen F."/>
            <person name="Schobel S."/>
            <person name="Town C.D."/>
        </authorList>
    </citation>
    <scope>GENOME REANNOTATION</scope>
    <source>
        <strain>cv. Columbia</strain>
    </source>
</reference>
<reference key="3">
    <citation type="journal article" date="2003" name="Science">
        <title>Empirical analysis of transcriptional activity in the Arabidopsis genome.</title>
        <authorList>
            <person name="Yamada K."/>
            <person name="Lim J."/>
            <person name="Dale J.M."/>
            <person name="Chen H."/>
            <person name="Shinn P."/>
            <person name="Palm C.J."/>
            <person name="Southwick A.M."/>
            <person name="Wu H.C."/>
            <person name="Kim C.J."/>
            <person name="Nguyen M."/>
            <person name="Pham P.K."/>
            <person name="Cheuk R.F."/>
            <person name="Karlin-Newmann G."/>
            <person name="Liu S.X."/>
            <person name="Lam B."/>
            <person name="Sakano H."/>
            <person name="Wu T."/>
            <person name="Yu G."/>
            <person name="Miranda M."/>
            <person name="Quach H.L."/>
            <person name="Tripp M."/>
            <person name="Chang C.H."/>
            <person name="Lee J.M."/>
            <person name="Toriumi M.J."/>
            <person name="Chan M.M."/>
            <person name="Tang C.C."/>
            <person name="Onodera C.S."/>
            <person name="Deng J.M."/>
            <person name="Akiyama K."/>
            <person name="Ansari Y."/>
            <person name="Arakawa T."/>
            <person name="Banh J."/>
            <person name="Banno F."/>
            <person name="Bowser L."/>
            <person name="Brooks S.Y."/>
            <person name="Carninci P."/>
            <person name="Chao Q."/>
            <person name="Choy N."/>
            <person name="Enju A."/>
            <person name="Goldsmith A.D."/>
            <person name="Gurjal M."/>
            <person name="Hansen N.F."/>
            <person name="Hayashizaki Y."/>
            <person name="Johnson-Hopson C."/>
            <person name="Hsuan V.W."/>
            <person name="Iida K."/>
            <person name="Karnes M."/>
            <person name="Khan S."/>
            <person name="Koesema E."/>
            <person name="Ishida J."/>
            <person name="Jiang P.X."/>
            <person name="Jones T."/>
            <person name="Kawai J."/>
            <person name="Kamiya A."/>
            <person name="Meyers C."/>
            <person name="Nakajima M."/>
            <person name="Narusaka M."/>
            <person name="Seki M."/>
            <person name="Sakurai T."/>
            <person name="Satou M."/>
            <person name="Tamse R."/>
            <person name="Vaysberg M."/>
            <person name="Wallender E.K."/>
            <person name="Wong C."/>
            <person name="Yamamura Y."/>
            <person name="Yuan S."/>
            <person name="Shinozaki K."/>
            <person name="Davis R.W."/>
            <person name="Theologis A."/>
            <person name="Ecker J.R."/>
        </authorList>
    </citation>
    <scope>NUCLEOTIDE SEQUENCE [LARGE SCALE MRNA]</scope>
    <source>
        <strain>cv. Columbia</strain>
    </source>
</reference>
<reference key="4">
    <citation type="journal article" date="2001" name="Planta">
        <title>Expression pattern of the Arabidopsis thaliana AtEP3/AtchitIV endochitinase gene.</title>
        <authorList>
            <person name="Passarinho P.A."/>
            <person name="Van Hengel A.J."/>
            <person name="Fransz P.F."/>
            <person name="de Vries S.C."/>
        </authorList>
    </citation>
    <scope>GENE FAMILY</scope>
</reference>
<protein>
    <recommendedName>
        <fullName evidence="5">Endochitinase At2g43610</fullName>
        <ecNumber>3.2.1.14</ecNumber>
    </recommendedName>
</protein>
<name>CHI61_ARATH</name>
<accession>O22842</accession>
<keyword id="KW-0119">Carbohydrate metabolism</keyword>
<keyword id="KW-0146">Chitin degradation</keyword>
<keyword id="KW-0147">Chitin-binding</keyword>
<keyword id="KW-1015">Disulfide bond</keyword>
<keyword id="KW-0325">Glycoprotein</keyword>
<keyword id="KW-0326">Glycosidase</keyword>
<keyword id="KW-0378">Hydrolase</keyword>
<keyword id="KW-0611">Plant defense</keyword>
<keyword id="KW-0624">Polysaccharide degradation</keyword>
<keyword id="KW-1185">Reference proteome</keyword>
<keyword id="KW-0732">Signal</keyword>
<dbReference type="EC" id="3.2.1.14"/>
<dbReference type="EMBL" id="AC002333">
    <property type="protein sequence ID" value="AAB64045.1"/>
    <property type="molecule type" value="Genomic_DNA"/>
</dbReference>
<dbReference type="EMBL" id="CP002685">
    <property type="protein sequence ID" value="AEC10295.1"/>
    <property type="molecule type" value="Genomic_DNA"/>
</dbReference>
<dbReference type="EMBL" id="AY072357">
    <property type="protein sequence ID" value="AAL62349.1"/>
    <property type="molecule type" value="mRNA"/>
</dbReference>
<dbReference type="EMBL" id="AY114724">
    <property type="protein sequence ID" value="AAM48043.1"/>
    <property type="molecule type" value="mRNA"/>
</dbReference>
<dbReference type="PIR" id="C84868">
    <property type="entry name" value="C84868"/>
</dbReference>
<dbReference type="RefSeq" id="NP_181889.1">
    <property type="nucleotide sequence ID" value="NM_129923.4"/>
</dbReference>
<dbReference type="SMR" id="O22842"/>
<dbReference type="FunCoup" id="O22842">
    <property type="interactions" value="136"/>
</dbReference>
<dbReference type="IntAct" id="O22842">
    <property type="interactions" value="1"/>
</dbReference>
<dbReference type="STRING" id="3702.O22842"/>
<dbReference type="CAZy" id="CBM18">
    <property type="family name" value="Carbohydrate-Binding Module Family 18"/>
</dbReference>
<dbReference type="CAZy" id="GH19">
    <property type="family name" value="Glycoside Hydrolase Family 19"/>
</dbReference>
<dbReference type="GlyGen" id="O22842">
    <property type="glycosylation" value="3 sites"/>
</dbReference>
<dbReference type="MetOSite" id="O22842"/>
<dbReference type="SwissPalm" id="O22842"/>
<dbReference type="PaxDb" id="3702-AT2G43610.1"/>
<dbReference type="ProteomicsDB" id="246780"/>
<dbReference type="EnsemblPlants" id="AT2G43610.1">
    <property type="protein sequence ID" value="AT2G43610.1"/>
    <property type="gene ID" value="AT2G43610"/>
</dbReference>
<dbReference type="GeneID" id="818963"/>
<dbReference type="Gramene" id="AT2G43610.1">
    <property type="protein sequence ID" value="AT2G43610.1"/>
    <property type="gene ID" value="AT2G43610"/>
</dbReference>
<dbReference type="KEGG" id="ath:AT2G43610"/>
<dbReference type="Araport" id="AT2G43610"/>
<dbReference type="TAIR" id="AT2G43610"/>
<dbReference type="eggNOG" id="KOG4742">
    <property type="taxonomic scope" value="Eukaryota"/>
</dbReference>
<dbReference type="HOGENOM" id="CLU_045506_1_1_1"/>
<dbReference type="InParanoid" id="O22842"/>
<dbReference type="OMA" id="ISSACKG"/>
<dbReference type="PhylomeDB" id="O22842"/>
<dbReference type="BioCyc" id="ARA:AT2G43610-MONOMER"/>
<dbReference type="PRO" id="PR:O22842"/>
<dbReference type="Proteomes" id="UP000006548">
    <property type="component" value="Chromosome 2"/>
</dbReference>
<dbReference type="ExpressionAtlas" id="O22842">
    <property type="expression patterns" value="baseline and differential"/>
</dbReference>
<dbReference type="GO" id="GO:0005886">
    <property type="term" value="C:plasma membrane"/>
    <property type="evidence" value="ECO:0007005"/>
    <property type="project" value="TAIR"/>
</dbReference>
<dbReference type="GO" id="GO:0008061">
    <property type="term" value="F:chitin binding"/>
    <property type="evidence" value="ECO:0007669"/>
    <property type="project" value="UniProtKB-KW"/>
</dbReference>
<dbReference type="GO" id="GO:0008843">
    <property type="term" value="F:endochitinase activity"/>
    <property type="evidence" value="ECO:0007669"/>
    <property type="project" value="UniProtKB-EC"/>
</dbReference>
<dbReference type="GO" id="GO:0016998">
    <property type="term" value="P:cell wall macromolecule catabolic process"/>
    <property type="evidence" value="ECO:0007669"/>
    <property type="project" value="InterPro"/>
</dbReference>
<dbReference type="GO" id="GO:0006032">
    <property type="term" value="P:chitin catabolic process"/>
    <property type="evidence" value="ECO:0007669"/>
    <property type="project" value="UniProtKB-KW"/>
</dbReference>
<dbReference type="GO" id="GO:0006952">
    <property type="term" value="P:defense response"/>
    <property type="evidence" value="ECO:0007669"/>
    <property type="project" value="UniProtKB-KW"/>
</dbReference>
<dbReference type="GO" id="GO:0000272">
    <property type="term" value="P:polysaccharide catabolic process"/>
    <property type="evidence" value="ECO:0007669"/>
    <property type="project" value="UniProtKB-KW"/>
</dbReference>
<dbReference type="CDD" id="cd00325">
    <property type="entry name" value="chitinase_GH19"/>
    <property type="match status" value="1"/>
</dbReference>
<dbReference type="CDD" id="cd00035">
    <property type="entry name" value="ChtBD1"/>
    <property type="match status" value="1"/>
</dbReference>
<dbReference type="FunFam" id="3.30.20.10:FF:000004">
    <property type="entry name" value="Chitinase family protein"/>
    <property type="match status" value="1"/>
</dbReference>
<dbReference type="FunFam" id="3.30.60.10:FF:000005">
    <property type="entry name" value="Endochitinase At2g43610"/>
    <property type="match status" value="1"/>
</dbReference>
<dbReference type="Gene3D" id="1.10.530.10">
    <property type="match status" value="1"/>
</dbReference>
<dbReference type="Gene3D" id="3.30.20.10">
    <property type="entry name" value="Endochitinase, domain 2"/>
    <property type="match status" value="1"/>
</dbReference>
<dbReference type="Gene3D" id="3.30.60.10">
    <property type="entry name" value="Endochitinase-like"/>
    <property type="match status" value="1"/>
</dbReference>
<dbReference type="InterPro" id="IPR001002">
    <property type="entry name" value="Chitin-bd_1"/>
</dbReference>
<dbReference type="InterPro" id="IPR018371">
    <property type="entry name" value="Chitin-binding_1_CS"/>
</dbReference>
<dbReference type="InterPro" id="IPR036861">
    <property type="entry name" value="Endochitinase-like_sf"/>
</dbReference>
<dbReference type="InterPro" id="IPR016283">
    <property type="entry name" value="Glyco_hydro_19"/>
</dbReference>
<dbReference type="InterPro" id="IPR000726">
    <property type="entry name" value="Glyco_hydro_19_cat"/>
</dbReference>
<dbReference type="InterPro" id="IPR023346">
    <property type="entry name" value="Lysozyme-like_dom_sf"/>
</dbReference>
<dbReference type="PANTHER" id="PTHR22595:SF197">
    <property type="entry name" value="CHITINASE FAMILY PROTEIN"/>
    <property type="match status" value="1"/>
</dbReference>
<dbReference type="PANTHER" id="PTHR22595">
    <property type="entry name" value="CHITINASE-RELATED"/>
    <property type="match status" value="1"/>
</dbReference>
<dbReference type="Pfam" id="PF00187">
    <property type="entry name" value="Chitin_bind_1"/>
    <property type="match status" value="1"/>
</dbReference>
<dbReference type="Pfam" id="PF00182">
    <property type="entry name" value="Glyco_hydro_19"/>
    <property type="match status" value="2"/>
</dbReference>
<dbReference type="PIRSF" id="PIRSF001060">
    <property type="entry name" value="Endochitinase"/>
    <property type="match status" value="1"/>
</dbReference>
<dbReference type="SMART" id="SM00270">
    <property type="entry name" value="ChtBD1"/>
    <property type="match status" value="1"/>
</dbReference>
<dbReference type="SUPFAM" id="SSF53955">
    <property type="entry name" value="Lysozyme-like"/>
    <property type="match status" value="1"/>
</dbReference>
<dbReference type="SUPFAM" id="SSF57016">
    <property type="entry name" value="Plant lectins/antimicrobial peptides"/>
    <property type="match status" value="1"/>
</dbReference>
<dbReference type="PROSITE" id="PS00026">
    <property type="entry name" value="CHIT_BIND_I_1"/>
    <property type="match status" value="1"/>
</dbReference>
<dbReference type="PROSITE" id="PS50941">
    <property type="entry name" value="CHIT_BIND_I_2"/>
    <property type="match status" value="1"/>
</dbReference>
<feature type="signal peptide" evidence="2">
    <location>
        <begin position="1"/>
        <end position="28"/>
    </location>
</feature>
<feature type="chain" id="PRO_0000433915" description="Endochitinase At2g43610" evidence="2">
    <location>
        <begin position="29"/>
        <end position="281"/>
    </location>
</feature>
<feature type="domain" description="Chitin-binding type-1" evidence="3">
    <location>
        <begin position="29"/>
        <end position="66"/>
    </location>
</feature>
<feature type="region of interest" description="Catalytic" evidence="1">
    <location>
        <begin position="86"/>
        <end position="281"/>
    </location>
</feature>
<feature type="active site" description="Proton donor" evidence="1">
    <location>
        <position position="148"/>
    </location>
</feature>
<feature type="glycosylation site" description="N-linked (GlcNAc...) asparagine" evidence="4">
    <location>
        <position position="278"/>
    </location>
</feature>
<feature type="disulfide bond" evidence="3">
    <location>
        <begin position="31"/>
        <end position="42"/>
    </location>
</feature>
<feature type="disulfide bond" evidence="3">
    <location>
        <begin position="36"/>
        <end position="48"/>
    </location>
</feature>
<feature type="disulfide bond" evidence="3">
    <location>
        <begin position="41"/>
        <end position="55"/>
    </location>
</feature>
<feature type="disulfide bond" evidence="3">
    <location>
        <begin position="59"/>
        <end position="64"/>
    </location>
</feature>
<proteinExistence type="evidence at protein level"/>
<evidence type="ECO:0000250" key="1">
    <source>
        <dbReference type="UniProtKB" id="P29022"/>
    </source>
</evidence>
<evidence type="ECO:0000255" key="2"/>
<evidence type="ECO:0000255" key="3">
    <source>
        <dbReference type="PROSITE-ProRule" id="PRU00261"/>
    </source>
</evidence>
<evidence type="ECO:0000255" key="4">
    <source>
        <dbReference type="PROSITE-ProRule" id="PRU00498"/>
    </source>
</evidence>
<evidence type="ECO:0000305" key="5"/>
<evidence type="ECO:0000312" key="6">
    <source>
        <dbReference type="EMBL" id="AAL62349.1"/>
    </source>
</evidence>
<evidence type="ECO:0000312" key="7">
    <source>
        <dbReference type="EMBL" id="AEC10295.1"/>
    </source>
</evidence>
<evidence type="ECO:0000312" key="8">
    <source>
        <dbReference type="Proteomes" id="UP000006548"/>
    </source>
</evidence>
<gene>
    <name evidence="6" type="ordered locus">At2g43610</name>
    <name evidence="7" type="ORF">F18O19.28</name>
</gene>